<protein>
    <recommendedName>
        <fullName evidence="1">3-methyl-2-oxobutanoate hydroxymethyltransferase</fullName>
        <ecNumber evidence="1">2.1.2.11</ecNumber>
    </recommendedName>
    <alternativeName>
        <fullName evidence="1">Ketopantoate hydroxymethyltransferase</fullName>
        <shortName evidence="1">KPHMT</shortName>
    </alternativeName>
</protein>
<reference key="1">
    <citation type="journal article" date="2005" name="DNA Res.">
        <title>Complete genome sequence of the facultative anaerobic magnetotactic bacterium Magnetospirillum sp. strain AMB-1.</title>
        <authorList>
            <person name="Matsunaga T."/>
            <person name="Okamura Y."/>
            <person name="Fukuda Y."/>
            <person name="Wahyudi A.T."/>
            <person name="Murase Y."/>
            <person name="Takeyama H."/>
        </authorList>
    </citation>
    <scope>NUCLEOTIDE SEQUENCE [LARGE SCALE GENOMIC DNA]</scope>
    <source>
        <strain>ATCC 700264 / AMB-1</strain>
    </source>
</reference>
<keyword id="KW-0963">Cytoplasm</keyword>
<keyword id="KW-0460">Magnesium</keyword>
<keyword id="KW-0479">Metal-binding</keyword>
<keyword id="KW-0566">Pantothenate biosynthesis</keyword>
<keyword id="KW-0808">Transferase</keyword>
<organism>
    <name type="scientific">Paramagnetospirillum magneticum (strain ATCC 700264 / AMB-1)</name>
    <name type="common">Magnetospirillum magneticum</name>
    <dbReference type="NCBI Taxonomy" id="342108"/>
    <lineage>
        <taxon>Bacteria</taxon>
        <taxon>Pseudomonadati</taxon>
        <taxon>Pseudomonadota</taxon>
        <taxon>Alphaproteobacteria</taxon>
        <taxon>Rhodospirillales</taxon>
        <taxon>Magnetospirillaceae</taxon>
        <taxon>Paramagnetospirillum</taxon>
    </lineage>
</organism>
<gene>
    <name evidence="1" type="primary">panB</name>
    <name type="ordered locus">amb4370</name>
</gene>
<accession>Q2VZ01</accession>
<dbReference type="EC" id="2.1.2.11" evidence="1"/>
<dbReference type="EMBL" id="AP007255">
    <property type="protein sequence ID" value="BAE53174.1"/>
    <property type="molecule type" value="Genomic_DNA"/>
</dbReference>
<dbReference type="RefSeq" id="WP_011386717.1">
    <property type="nucleotide sequence ID" value="NC_007626.1"/>
</dbReference>
<dbReference type="SMR" id="Q2VZ01"/>
<dbReference type="STRING" id="342108.amb4370"/>
<dbReference type="KEGG" id="mag:amb4370"/>
<dbReference type="HOGENOM" id="CLU_036645_1_0_5"/>
<dbReference type="OrthoDB" id="9781789at2"/>
<dbReference type="UniPathway" id="UPA00028">
    <property type="reaction ID" value="UER00003"/>
</dbReference>
<dbReference type="Proteomes" id="UP000007058">
    <property type="component" value="Chromosome"/>
</dbReference>
<dbReference type="GO" id="GO:0005737">
    <property type="term" value="C:cytoplasm"/>
    <property type="evidence" value="ECO:0007669"/>
    <property type="project" value="UniProtKB-SubCell"/>
</dbReference>
<dbReference type="GO" id="GO:0003864">
    <property type="term" value="F:3-methyl-2-oxobutanoate hydroxymethyltransferase activity"/>
    <property type="evidence" value="ECO:0007669"/>
    <property type="project" value="UniProtKB-UniRule"/>
</dbReference>
<dbReference type="GO" id="GO:0000287">
    <property type="term" value="F:magnesium ion binding"/>
    <property type="evidence" value="ECO:0007669"/>
    <property type="project" value="TreeGrafter"/>
</dbReference>
<dbReference type="GO" id="GO:0015940">
    <property type="term" value="P:pantothenate biosynthetic process"/>
    <property type="evidence" value="ECO:0007669"/>
    <property type="project" value="UniProtKB-UniRule"/>
</dbReference>
<dbReference type="CDD" id="cd06557">
    <property type="entry name" value="KPHMT-like"/>
    <property type="match status" value="1"/>
</dbReference>
<dbReference type="FunFam" id="3.20.20.60:FF:000003">
    <property type="entry name" value="3-methyl-2-oxobutanoate hydroxymethyltransferase"/>
    <property type="match status" value="1"/>
</dbReference>
<dbReference type="Gene3D" id="3.20.20.60">
    <property type="entry name" value="Phosphoenolpyruvate-binding domains"/>
    <property type="match status" value="1"/>
</dbReference>
<dbReference type="HAMAP" id="MF_00156">
    <property type="entry name" value="PanB"/>
    <property type="match status" value="1"/>
</dbReference>
<dbReference type="InterPro" id="IPR003700">
    <property type="entry name" value="Pantoate_hydroxy_MeTrfase"/>
</dbReference>
<dbReference type="InterPro" id="IPR015813">
    <property type="entry name" value="Pyrv/PenolPyrv_kinase-like_dom"/>
</dbReference>
<dbReference type="InterPro" id="IPR040442">
    <property type="entry name" value="Pyrv_kinase-like_dom_sf"/>
</dbReference>
<dbReference type="NCBIfam" id="TIGR00222">
    <property type="entry name" value="panB"/>
    <property type="match status" value="1"/>
</dbReference>
<dbReference type="NCBIfam" id="NF001452">
    <property type="entry name" value="PRK00311.1"/>
    <property type="match status" value="1"/>
</dbReference>
<dbReference type="PANTHER" id="PTHR20881">
    <property type="entry name" value="3-METHYL-2-OXOBUTANOATE HYDROXYMETHYLTRANSFERASE"/>
    <property type="match status" value="1"/>
</dbReference>
<dbReference type="PANTHER" id="PTHR20881:SF0">
    <property type="entry name" value="3-METHYL-2-OXOBUTANOATE HYDROXYMETHYLTRANSFERASE"/>
    <property type="match status" value="1"/>
</dbReference>
<dbReference type="Pfam" id="PF02548">
    <property type="entry name" value="Pantoate_transf"/>
    <property type="match status" value="1"/>
</dbReference>
<dbReference type="PIRSF" id="PIRSF000388">
    <property type="entry name" value="Pantoate_hydroxy_MeTrfase"/>
    <property type="match status" value="1"/>
</dbReference>
<dbReference type="SUPFAM" id="SSF51621">
    <property type="entry name" value="Phosphoenolpyruvate/pyruvate domain"/>
    <property type="match status" value="1"/>
</dbReference>
<name>PANB_PARM1</name>
<proteinExistence type="inferred from homology"/>
<evidence type="ECO:0000255" key="1">
    <source>
        <dbReference type="HAMAP-Rule" id="MF_00156"/>
    </source>
</evidence>
<sequence length="274" mass="29235">MSTEVRIKRITTRDIRARKGAEPLVVLTAYTAPIARLLDPICDILLVGDSLGMVVYGMETTLAVTLEMMINHGAAVVRSSSRACVVVDMPFGSYQESKEQAFRNCARVMAETGCAAVKLEGGRELAETIRFLTDRGIPVMAHIGLKPQAVHAAGGFRAQGRIESEAEAIRADARAITEAGAFSVVVEGTVEPVAQALSAEIAIPTIGIGASAACDGQVLVIDDLVGLFDDFTPKFVKRYADLRPIITKAAEDYAAEVKARTFPGPEHCFGVAKK</sequence>
<feature type="chain" id="PRO_0000297291" description="3-methyl-2-oxobutanoate hydroxymethyltransferase">
    <location>
        <begin position="1"/>
        <end position="274"/>
    </location>
</feature>
<feature type="active site" description="Proton acceptor" evidence="1">
    <location>
        <position position="187"/>
    </location>
</feature>
<feature type="binding site" evidence="1">
    <location>
        <begin position="49"/>
        <end position="50"/>
    </location>
    <ligand>
        <name>3-methyl-2-oxobutanoate</name>
        <dbReference type="ChEBI" id="CHEBI:11851"/>
    </ligand>
</feature>
<feature type="binding site" evidence="1">
    <location>
        <position position="49"/>
    </location>
    <ligand>
        <name>Mg(2+)</name>
        <dbReference type="ChEBI" id="CHEBI:18420"/>
    </ligand>
</feature>
<feature type="binding site" evidence="1">
    <location>
        <position position="88"/>
    </location>
    <ligand>
        <name>3-methyl-2-oxobutanoate</name>
        <dbReference type="ChEBI" id="CHEBI:11851"/>
    </ligand>
</feature>
<feature type="binding site" evidence="1">
    <location>
        <position position="88"/>
    </location>
    <ligand>
        <name>Mg(2+)</name>
        <dbReference type="ChEBI" id="CHEBI:18420"/>
    </ligand>
</feature>
<feature type="binding site" evidence="1">
    <location>
        <position position="118"/>
    </location>
    <ligand>
        <name>3-methyl-2-oxobutanoate</name>
        <dbReference type="ChEBI" id="CHEBI:11851"/>
    </ligand>
</feature>
<feature type="binding site" evidence="1">
    <location>
        <position position="120"/>
    </location>
    <ligand>
        <name>Mg(2+)</name>
        <dbReference type="ChEBI" id="CHEBI:18420"/>
    </ligand>
</feature>
<comment type="function">
    <text evidence="1">Catalyzes the reversible reaction in which hydroxymethyl group from 5,10-methylenetetrahydrofolate is transferred onto alpha-ketoisovalerate to form ketopantoate.</text>
</comment>
<comment type="catalytic activity">
    <reaction evidence="1">
        <text>3-methyl-2-oxobutanoate + (6R)-5,10-methylene-5,6,7,8-tetrahydrofolate + H2O = 2-dehydropantoate + (6S)-5,6,7,8-tetrahydrofolate</text>
        <dbReference type="Rhea" id="RHEA:11824"/>
        <dbReference type="ChEBI" id="CHEBI:11561"/>
        <dbReference type="ChEBI" id="CHEBI:11851"/>
        <dbReference type="ChEBI" id="CHEBI:15377"/>
        <dbReference type="ChEBI" id="CHEBI:15636"/>
        <dbReference type="ChEBI" id="CHEBI:57453"/>
        <dbReference type="EC" id="2.1.2.11"/>
    </reaction>
</comment>
<comment type="cofactor">
    <cofactor evidence="1">
        <name>Mg(2+)</name>
        <dbReference type="ChEBI" id="CHEBI:18420"/>
    </cofactor>
    <text evidence="1">Binds 1 Mg(2+) ion per subunit.</text>
</comment>
<comment type="pathway">
    <text evidence="1">Cofactor biosynthesis; (R)-pantothenate biosynthesis; (R)-pantoate from 3-methyl-2-oxobutanoate: step 1/2.</text>
</comment>
<comment type="subunit">
    <text evidence="1">Homodecamer; pentamer of dimers.</text>
</comment>
<comment type="subcellular location">
    <subcellularLocation>
        <location evidence="1">Cytoplasm</location>
    </subcellularLocation>
</comment>
<comment type="similarity">
    <text evidence="1">Belongs to the PanB family.</text>
</comment>